<protein>
    <recommendedName>
        <fullName evidence="9">Cytotoxin 4</fullName>
    </recommendedName>
    <alternativeName>
        <fullName evidence="8">CTX M3</fullName>
    </alternativeName>
    <alternativeName>
        <fullName evidence="6">Cardiotoxin VII4</fullName>
    </alternativeName>
    <alternativeName>
        <fullName evidence="7">Cytotoxin V(II)4</fullName>
    </alternativeName>
</protein>
<organism>
    <name type="scientific">Naja mossambica</name>
    <name type="common">Mozambique spitting cobra</name>
    <dbReference type="NCBI Taxonomy" id="8644"/>
    <lineage>
        <taxon>Eukaryota</taxon>
        <taxon>Metazoa</taxon>
        <taxon>Chordata</taxon>
        <taxon>Craniata</taxon>
        <taxon>Vertebrata</taxon>
        <taxon>Euteleostomi</taxon>
        <taxon>Lepidosauria</taxon>
        <taxon>Squamata</taxon>
        <taxon>Bifurcata</taxon>
        <taxon>Unidentata</taxon>
        <taxon>Episquamata</taxon>
        <taxon>Toxicofera</taxon>
        <taxon>Serpentes</taxon>
        <taxon>Colubroidea</taxon>
        <taxon>Elapidae</taxon>
        <taxon>Elapinae</taxon>
        <taxon>Naja</taxon>
    </lineage>
</organism>
<dbReference type="PIR" id="A01717">
    <property type="entry name" value="H3NJ4M"/>
</dbReference>
<dbReference type="PDB" id="1CDT">
    <property type="method" value="X-ray"/>
    <property type="resolution" value="2.50 A"/>
    <property type="chains" value="A/B=1-60"/>
</dbReference>
<dbReference type="PDBsum" id="1CDT"/>
<dbReference type="BMRB" id="P01452"/>
<dbReference type="SMR" id="P01452"/>
<dbReference type="EvolutionaryTrace" id="P01452"/>
<dbReference type="GO" id="GO:0005576">
    <property type="term" value="C:extracellular region"/>
    <property type="evidence" value="ECO:0007669"/>
    <property type="project" value="UniProtKB-SubCell"/>
</dbReference>
<dbReference type="GO" id="GO:0016020">
    <property type="term" value="C:membrane"/>
    <property type="evidence" value="ECO:0007669"/>
    <property type="project" value="UniProtKB-KW"/>
</dbReference>
<dbReference type="GO" id="GO:0044218">
    <property type="term" value="C:other organism cell membrane"/>
    <property type="evidence" value="ECO:0007669"/>
    <property type="project" value="UniProtKB-KW"/>
</dbReference>
<dbReference type="GO" id="GO:0090729">
    <property type="term" value="F:toxin activity"/>
    <property type="evidence" value="ECO:0007669"/>
    <property type="project" value="UniProtKB-KW"/>
</dbReference>
<dbReference type="GO" id="GO:0031640">
    <property type="term" value="P:killing of cells of another organism"/>
    <property type="evidence" value="ECO:0007669"/>
    <property type="project" value="UniProtKB-KW"/>
</dbReference>
<dbReference type="CDD" id="cd00206">
    <property type="entry name" value="TFP_snake_toxin"/>
    <property type="match status" value="1"/>
</dbReference>
<dbReference type="FunFam" id="2.10.60.10:FF:000024">
    <property type="entry name" value="Cytotoxin 1"/>
    <property type="match status" value="1"/>
</dbReference>
<dbReference type="Gene3D" id="2.10.60.10">
    <property type="entry name" value="CD59"/>
    <property type="match status" value="1"/>
</dbReference>
<dbReference type="InterPro" id="IPR003572">
    <property type="entry name" value="Cytotoxin_Cobra"/>
</dbReference>
<dbReference type="InterPro" id="IPR003571">
    <property type="entry name" value="Snake_3FTx"/>
</dbReference>
<dbReference type="InterPro" id="IPR045860">
    <property type="entry name" value="Snake_toxin-like_sf"/>
</dbReference>
<dbReference type="InterPro" id="IPR018354">
    <property type="entry name" value="Snake_toxin_con_site"/>
</dbReference>
<dbReference type="InterPro" id="IPR054131">
    <property type="entry name" value="Toxin_cobra-type"/>
</dbReference>
<dbReference type="Pfam" id="PF21947">
    <property type="entry name" value="Toxin_cobra-type"/>
    <property type="match status" value="1"/>
</dbReference>
<dbReference type="PRINTS" id="PR00282">
    <property type="entry name" value="CYTOTOXIN"/>
</dbReference>
<dbReference type="SUPFAM" id="SSF57302">
    <property type="entry name" value="Snake toxin-like"/>
    <property type="match status" value="1"/>
</dbReference>
<dbReference type="PROSITE" id="PS00272">
    <property type="entry name" value="SNAKE_TOXIN"/>
    <property type="match status" value="1"/>
</dbReference>
<keyword id="KW-0002">3D-structure</keyword>
<keyword id="KW-0123">Cardiotoxin</keyword>
<keyword id="KW-0204">Cytolysis</keyword>
<keyword id="KW-0903">Direct protein sequencing</keyword>
<keyword id="KW-1015">Disulfide bond</keyword>
<keyword id="KW-0472">Membrane</keyword>
<keyword id="KW-0964">Secreted</keyword>
<keyword id="KW-1052">Target cell membrane</keyword>
<keyword id="KW-1053">Target membrane</keyword>
<keyword id="KW-0800">Toxin</keyword>
<reference key="1">
    <citation type="journal article" date="1974" name="Biochem. Biophys. Res. Commun.">
        <title>Snake venom toxins. The complete amino acid sequence of cytotoxin VII4 from the venom of Naja mossambica mossambica.</title>
        <authorList>
            <person name="Louw A.I."/>
        </authorList>
    </citation>
    <scope>PROTEIN SEQUENCE</scope>
    <scope>SUBCELLULAR LOCATION</scope>
    <source>
        <tissue>Venom</tissue>
    </source>
</reference>
<reference key="2">
    <citation type="journal article" date="1994" name="J. Biol. Chem.">
        <title>Two distinct types of cardiotoxin as revealed by the structure and activity relationship of their interaction with zwitterionic phospholipid dispersions.</title>
        <authorList>
            <person name="Chien K.-Y."/>
            <person name="Chiang C.-M."/>
            <person name="Hseu Y.-C."/>
            <person name="Vyas A.A."/>
            <person name="Rule G.S."/>
            <person name="Wu W.-G."/>
        </authorList>
    </citation>
    <scope>FUNCTION</scope>
    <scope>APPARTENANCE TO S-TYPE CYTOTOXIN GROUP</scope>
</reference>
<reference key="3">
    <citation type="journal article" date="1990" name="J. Mol. Biol.">
        <title>Cardiotoxin VII4 from Naja mossambica mossambica. The refined crystal structure.</title>
        <authorList>
            <person name="Rees B."/>
            <person name="Bilwes A."/>
            <person name="Samama J.-P."/>
            <person name="Moras D."/>
        </authorList>
    </citation>
    <scope>X-RAY CRYSTALLOGRAPHY (1.8 ANGSTROMS)</scope>
    <scope>DISULFIDE BONDS</scope>
</reference>
<comment type="function">
    <text evidence="1 2 5">Shows cytolytic activity on many different cells by forming pore in lipid membranes. In vivo, increases heart rate or kills the animal by cardiac arrest. In addition, it binds to heparin with high affinity, interacts with Kv channel-interacting protein 1 (KCNIP1) in a calcium-independent manner, and binds to integrin alpha-V/beta-3 (ITGAV/ITGB3) with moderate affinity.</text>
</comment>
<comment type="subunit">
    <text evidence="1">Monomer in solution; Homodimer and oligomer in the presence of negatively charged lipids forming a pore with a size ranging between 20 and 30 Angstroms.</text>
</comment>
<comment type="subcellular location">
    <subcellularLocation>
        <location evidence="4">Secreted</location>
    </subcellularLocation>
    <subcellularLocation>
        <location evidence="1">Target cell membrane</location>
    </subcellularLocation>
</comment>
<comment type="tissue specificity">
    <text>Expressed by the venom gland.</text>
</comment>
<comment type="toxic dose">
    <text>LD(50) is 1.97 mg/kg by intravenous injection.</text>
</comment>
<comment type="miscellaneous">
    <text evidence="10">Is classified as a S-type cytotoxin, since a serine residue stands at position 28 (Ser-29 in standard classification).</text>
</comment>
<comment type="similarity">
    <text evidence="9">Belongs to the three-finger toxin family. Short-chain subfamily. Type IA cytotoxin sub-subfamily.</text>
</comment>
<proteinExistence type="evidence at protein level"/>
<feature type="chain" id="PRO_0000093508" description="Cytotoxin 4" evidence="4">
    <location>
        <begin position="1"/>
        <end position="60"/>
    </location>
</feature>
<feature type="disulfide bond" evidence="3 11">
    <location>
        <begin position="3"/>
        <end position="21"/>
    </location>
</feature>
<feature type="disulfide bond" evidence="3 11">
    <location>
        <begin position="14"/>
        <end position="38"/>
    </location>
</feature>
<feature type="disulfide bond" evidence="3 11">
    <location>
        <begin position="42"/>
        <end position="53"/>
    </location>
</feature>
<feature type="disulfide bond" evidence="3 11">
    <location>
        <begin position="54"/>
        <end position="59"/>
    </location>
</feature>
<feature type="strand" evidence="12">
    <location>
        <begin position="2"/>
        <end position="4"/>
    </location>
</feature>
<feature type="strand" evidence="12">
    <location>
        <begin position="11"/>
        <end position="13"/>
    </location>
</feature>
<feature type="strand" evidence="12">
    <location>
        <begin position="20"/>
        <end position="26"/>
    </location>
</feature>
<feature type="turn" evidence="12">
    <location>
        <begin position="27"/>
        <end position="30"/>
    </location>
</feature>
<feature type="strand" evidence="12">
    <location>
        <begin position="32"/>
        <end position="41"/>
    </location>
</feature>
<feature type="strand" evidence="12">
    <location>
        <begin position="47"/>
        <end position="54"/>
    </location>
</feature>
<sequence length="60" mass="6715">LKCNKLIPIAYKTCPEGKNLCYKMMLASKKMVPVKRGCINVCPKNSALVKYVCCSTDRCN</sequence>
<accession>P01452</accession>
<evidence type="ECO:0000250" key="1">
    <source>
        <dbReference type="UniProtKB" id="P60301"/>
    </source>
</evidence>
<evidence type="ECO:0000250" key="2">
    <source>
        <dbReference type="UniProtKB" id="P60304"/>
    </source>
</evidence>
<evidence type="ECO:0000269" key="3">
    <source>
    </source>
</evidence>
<evidence type="ECO:0000269" key="4">
    <source>
    </source>
</evidence>
<evidence type="ECO:0000269" key="5">
    <source>
    </source>
</evidence>
<evidence type="ECO:0000303" key="6">
    <source>
    </source>
</evidence>
<evidence type="ECO:0000303" key="7">
    <source>
    </source>
</evidence>
<evidence type="ECO:0000303" key="8">
    <source>
    </source>
</evidence>
<evidence type="ECO:0000305" key="9"/>
<evidence type="ECO:0000305" key="10">
    <source>
    </source>
</evidence>
<evidence type="ECO:0000312" key="11">
    <source>
        <dbReference type="PDB" id="1CDT"/>
    </source>
</evidence>
<evidence type="ECO:0007829" key="12">
    <source>
        <dbReference type="PDB" id="1CDT"/>
    </source>
</evidence>
<name>3SA4_NAJMO</name>